<comment type="function">
    <text evidence="1">Relays signals from the cell surface to the nucleus to weaken adherens junction and promote actin cytoskeleton reorganization and cell invasiveness. Involved in lysophosphatidic acid-induced cell adhesion and migration. Acts as a transcriptional coactivator for NF-kappa-B and JUN, and mediates the transrepression of these transcription factors induced by glucocorticoid receptor (By similarity).</text>
</comment>
<comment type="subunit">
    <text evidence="2 5 6">Specifically interacts with the ligand binding domain of the thyroid receptor (TR) in the presence of thyroid hormone (By similarity). Interacts (via the third LIM domain and C-terminus) with PTPN13 (via the second PDZ domain). Interacts (via the second LIM domain or via the third LIM domain plus C-terminus) with PDLIM4 (via PDZ domain). Found in a complex with PTPN13 and PDLIM4 (PubMed:10826496). Interacts with SVIL isoform 2. Interacts with LPAR2 but not other LPA receptors. Interacts with PRKAA2. Interacts with MAGI1. Interacts with SCRIB (By similarity). In case of infection, interacts with S.typhimurium protein sseI (PubMed:17095609).</text>
</comment>
<comment type="interaction">
    <interactant intactId="EBI-643879">
        <id>Q9Z1Y4</id>
    </interactant>
    <interactant intactId="EBI-7288319">
        <id>P70271</id>
        <label>Pdlim4</label>
    </interactant>
    <organismsDiffer>false</organismsDiffer>
    <experiments>2</experiments>
</comment>
<comment type="subcellular location">
    <subcellularLocation>
        <location evidence="2">Cytoplasm</location>
        <location evidence="2">Cytoskeleton</location>
    </subcellularLocation>
    <subcellularLocation>
        <location evidence="2">Cell junction</location>
        <location evidence="2">Focal adhesion</location>
    </subcellularLocation>
    <subcellularLocation>
        <location evidence="2">Nucleus</location>
    </subcellularLocation>
    <subcellularLocation>
        <location evidence="2">Cytoplasm</location>
    </subcellularLocation>
    <text evidence="2">Shuttles between nucleus and cytoplasm. Colocalizes with actin.</text>
</comment>
<comment type="tissue specificity">
    <text evidence="5">Highly expressed in kidney, stomach, lung, heart and testis. Low expression levels in brain, colon, thymus, pancreas and skin. Not expressed in skeletal muscle.</text>
</comment>
<comment type="developmental stage">
    <text evidence="5">Expressed throughout development in all embryonic stages analyzed, 10.5 days post coitum (dpc) to 18.5 dpc. In 16.5 dpc embryos highly expressed in skin, lung, thymus, duodenum and the ependymal cell layer surrounding the ventricles in brain. Highly expressed also in the salivary glands, tongue, vibrissae, choroid plexus, blood vessel walls, esophagus and midgut. Low expression levels in spinal cord, heart and liver.</text>
</comment>
<comment type="domain">
    <text evidence="1">The LIM zinc-binding domains mediate interaction with LPAR2.</text>
</comment>
<comment type="PTM">
    <text evidence="1">Phosphorylation at Tyr-55 by SRC is required for enhancement of lysophosphatidic acid-induced cell migration. Tyr-55 is dephosphorylated by PTPN13 (By similarity).</text>
</comment>
<comment type="similarity">
    <text evidence="7">Belongs to the zyxin/ajuba family.</text>
</comment>
<evidence type="ECO:0000250" key="1"/>
<evidence type="ECO:0000250" key="2">
    <source>
        <dbReference type="UniProtKB" id="Q15654"/>
    </source>
</evidence>
<evidence type="ECO:0000255" key="3">
    <source>
        <dbReference type="PROSITE-ProRule" id="PRU00125"/>
    </source>
</evidence>
<evidence type="ECO:0000256" key="4">
    <source>
        <dbReference type="SAM" id="MobiDB-lite"/>
    </source>
</evidence>
<evidence type="ECO:0000269" key="5">
    <source>
    </source>
</evidence>
<evidence type="ECO:0000269" key="6">
    <source>
    </source>
</evidence>
<evidence type="ECO:0000305" key="7"/>
<evidence type="ECO:0007744" key="8">
    <source>
    </source>
</evidence>
<evidence type="ECO:0007744" key="9">
    <source>
    </source>
</evidence>
<proteinExistence type="evidence at protein level"/>
<feature type="chain" id="PRO_0000274689" description="Thyroid receptor-interacting protein 6">
    <location>
        <begin position="1"/>
        <end position="480"/>
    </location>
</feature>
<feature type="domain" description="LIM zinc-binding 1" evidence="3">
    <location>
        <begin position="281"/>
        <end position="339"/>
    </location>
</feature>
<feature type="domain" description="LIM zinc-binding 2" evidence="3">
    <location>
        <begin position="341"/>
        <end position="401"/>
    </location>
</feature>
<feature type="domain" description="LIM zinc-binding 3" evidence="3">
    <location>
        <begin position="404"/>
        <end position="471"/>
    </location>
</feature>
<feature type="region of interest" description="Disordered" evidence="4">
    <location>
        <begin position="1"/>
        <end position="43"/>
    </location>
</feature>
<feature type="region of interest" description="Disordered" evidence="4">
    <location>
        <begin position="57"/>
        <end position="84"/>
    </location>
</feature>
<feature type="region of interest" description="Disordered" evidence="4">
    <location>
        <begin position="107"/>
        <end position="134"/>
    </location>
</feature>
<feature type="region of interest" description="Disordered" evidence="4">
    <location>
        <begin position="218"/>
        <end position="257"/>
    </location>
</feature>
<feature type="region of interest" description="Interaction with MAGI1 and PTPN13" evidence="1">
    <location>
        <begin position="473"/>
        <end position="480"/>
    </location>
</feature>
<feature type="compositionally biased region" description="Pro residues" evidence="4">
    <location>
        <begin position="1"/>
        <end position="12"/>
    </location>
</feature>
<feature type="compositionally biased region" description="Basic and acidic residues" evidence="4">
    <location>
        <begin position="108"/>
        <end position="122"/>
    </location>
</feature>
<feature type="compositionally biased region" description="Gly residues" evidence="4">
    <location>
        <begin position="238"/>
        <end position="247"/>
    </location>
</feature>
<feature type="modified residue" description="Asymmetric dimethylarginine; alternate" evidence="9">
    <location>
        <position position="25"/>
    </location>
</feature>
<feature type="modified residue" description="Omega-N-methylarginine; alternate" evidence="2">
    <location>
        <position position="25"/>
    </location>
</feature>
<feature type="modified residue" description="Phosphotyrosine; by SRC" evidence="2">
    <location>
        <position position="55"/>
    </location>
</feature>
<feature type="modified residue" description="Phosphoserine" evidence="8">
    <location>
        <position position="92"/>
    </location>
</feature>
<feature type="modified residue" description="Omega-N-methylarginine" evidence="2">
    <location>
        <position position="111"/>
    </location>
</feature>
<feature type="modified residue" description="Omega-N-methylarginine" evidence="2">
    <location>
        <position position="183"/>
    </location>
</feature>
<feature type="modified residue" description="Omega-N-methylarginine" evidence="9">
    <location>
        <position position="190"/>
    </location>
</feature>
<feature type="modified residue" description="Phosphoserine" evidence="2">
    <location>
        <position position="193"/>
    </location>
</feature>
<feature type="modified residue" description="Omega-N-methylarginine" evidence="9">
    <location>
        <position position="209"/>
    </location>
</feature>
<feature type="modified residue" description="Omega-N-methylarginine" evidence="9">
    <location>
        <position position="242"/>
    </location>
</feature>
<feature type="mutagenesis site" description="Interacts with PDLIM4. Loss of interaction with PTPN13." evidence="5">
    <location>
        <begin position="479"/>
        <end position="480"/>
    </location>
</feature>
<feature type="sequence conflict" description="In Ref. 4; BAE35042." evidence="7" ref="4">
    <original>G</original>
    <variation>D</variation>
    <location>
        <position position="141"/>
    </location>
</feature>
<sequence>MSGPTWLPPKQPEPSRLPQGRSLPRGALGPPTAHGATLQPHPRVNFCPLPPEHCYQPPGVPEDRGPTWVGSHGTPQRLQGLPPDRGIIRPGSLDAEIDSLTSMLADLDGGRSHAPRRPDRQAFEAPPPHAYRGGSLKPSGGAVPTPMLPASHYGGPTPASYATASTPAGPAFPVQVKVAQPVRGCGLPRRGASQASGPLPGPHFPLTGRGEVWGAGYRSHREPGPGVPEGPSGVHIPAGGGRGGGHEPQGPLGQPPEEELERLTKKLVHDMSHPPSGEYFGRCGGCGEDVVGDGAGVVALDRVFHIGCFVCSTCRAQLRGQHFYAVERRAYCESCYVATLEKCSTCSEPILDRILRAMGKAYHPGCFTCVVCHRGLDGIPFTVDATSQIHCIEDFHRKFAPRCSVCGGAIMPEPGQEETVRIVALDRSFHIGCYKCEECGLLLSSEGECQGCYPLDGHILCKACSAWRIQELSATVTTDC</sequence>
<accession>Q9Z1Y4</accession>
<accession>Q3TX74</accession>
<keyword id="KW-0130">Cell adhesion</keyword>
<keyword id="KW-0965">Cell junction</keyword>
<keyword id="KW-0963">Cytoplasm</keyword>
<keyword id="KW-0206">Cytoskeleton</keyword>
<keyword id="KW-0440">LIM domain</keyword>
<keyword id="KW-0479">Metal-binding</keyword>
<keyword id="KW-0488">Methylation</keyword>
<keyword id="KW-0539">Nucleus</keyword>
<keyword id="KW-0597">Phosphoprotein</keyword>
<keyword id="KW-1185">Reference proteome</keyword>
<keyword id="KW-0677">Repeat</keyword>
<keyword id="KW-0804">Transcription</keyword>
<keyword id="KW-0805">Transcription regulation</keyword>
<keyword id="KW-0862">Zinc</keyword>
<organism>
    <name type="scientific">Mus musculus</name>
    <name type="common">Mouse</name>
    <dbReference type="NCBI Taxonomy" id="10090"/>
    <lineage>
        <taxon>Eukaryota</taxon>
        <taxon>Metazoa</taxon>
        <taxon>Chordata</taxon>
        <taxon>Craniata</taxon>
        <taxon>Vertebrata</taxon>
        <taxon>Euteleostomi</taxon>
        <taxon>Mammalia</taxon>
        <taxon>Eutheria</taxon>
        <taxon>Euarchontoglires</taxon>
        <taxon>Glires</taxon>
        <taxon>Rodentia</taxon>
        <taxon>Myomorpha</taxon>
        <taxon>Muroidea</taxon>
        <taxon>Muridae</taxon>
        <taxon>Murinae</taxon>
        <taxon>Mus</taxon>
        <taxon>Mus</taxon>
    </lineage>
</organism>
<name>TRIP6_MOUSE</name>
<protein>
    <recommendedName>
        <fullName>Thyroid receptor-interacting protein 6</fullName>
        <shortName>TR-interacting protein 6</shortName>
        <shortName>TRIP-6</shortName>
    </recommendedName>
    <alternativeName>
        <fullName>Zyxin-related protein 1</fullName>
        <shortName>ZRP-1</shortName>
    </alternativeName>
</protein>
<gene>
    <name type="primary">Trip6</name>
    <name type="synonym">Zrp1</name>
</gene>
<reference key="1">
    <citation type="journal article" date="1999" name="Gene">
        <title>Characterization of mouse Trip6: a putative intracellular signaling protein.</title>
        <authorList>
            <person name="Wang Y."/>
            <person name="Dooher J.E."/>
            <person name="Koedood Zhao M."/>
            <person name="Gilmore T.D."/>
        </authorList>
    </citation>
    <scope>NUCLEOTIDE SEQUENCE [MRNA]</scope>
    <source>
        <strain>C3H/HeJ</strain>
    </source>
</reference>
<reference key="2">
    <citation type="journal article" date="2000" name="Eur. J. Cell Biol.">
        <title>The zyxin-related protein TRIP6 interacts with PDZ motifs in the adaptor protein RIL and the protein tyrosine phosphatase PTP-BL.</title>
        <authorList>
            <person name="Cuppen E."/>
            <person name="van Ham M."/>
            <person name="Wansink D.G."/>
            <person name="de Leeuw A."/>
            <person name="Wieringa B."/>
            <person name="Hendriks W."/>
        </authorList>
    </citation>
    <scope>NUCLEOTIDE SEQUENCE [MRNA]</scope>
    <scope>INTERACTION WITH PDLIM4 AND PTPN13</scope>
    <scope>TISSUE SPECIFICITY</scope>
    <scope>DEVELOPMENTAL STAGE</scope>
    <scope>MUTAGENESIS OF 479-ASP-CYS-480</scope>
    <source>
        <strain>C57BL/6J</strain>
    </source>
</reference>
<reference key="3">
    <citation type="journal article" date="2001" name="Nucleic Acids Res.">
        <title>Comparative analysis of the gene-dense ACHE/TFR2 region on human chromosome 7q22 with the orthologous region on mouse chromosome 5.</title>
        <authorList>
            <person name="Wilson M.D."/>
            <person name="Riemer C."/>
            <person name="Martindale D.W."/>
            <person name="Schnupf P."/>
            <person name="Boright A.P."/>
            <person name="Cheung T.L."/>
            <person name="Hardy D.M."/>
            <person name="Schwartz S."/>
            <person name="Scherer S.W."/>
            <person name="Tsui L.-C."/>
            <person name="Miller W."/>
            <person name="Koop B.F."/>
        </authorList>
    </citation>
    <scope>NUCLEOTIDE SEQUENCE [GENOMIC DNA]</scope>
    <source>
        <strain>129/Sv</strain>
    </source>
</reference>
<reference key="4">
    <citation type="journal article" date="2005" name="Science">
        <title>The transcriptional landscape of the mammalian genome.</title>
        <authorList>
            <person name="Carninci P."/>
            <person name="Kasukawa T."/>
            <person name="Katayama S."/>
            <person name="Gough J."/>
            <person name="Frith M.C."/>
            <person name="Maeda N."/>
            <person name="Oyama R."/>
            <person name="Ravasi T."/>
            <person name="Lenhard B."/>
            <person name="Wells C."/>
            <person name="Kodzius R."/>
            <person name="Shimokawa K."/>
            <person name="Bajic V.B."/>
            <person name="Brenner S.E."/>
            <person name="Batalov S."/>
            <person name="Forrest A.R."/>
            <person name="Zavolan M."/>
            <person name="Davis M.J."/>
            <person name="Wilming L.G."/>
            <person name="Aidinis V."/>
            <person name="Allen J.E."/>
            <person name="Ambesi-Impiombato A."/>
            <person name="Apweiler R."/>
            <person name="Aturaliya R.N."/>
            <person name="Bailey T.L."/>
            <person name="Bansal M."/>
            <person name="Baxter L."/>
            <person name="Beisel K.W."/>
            <person name="Bersano T."/>
            <person name="Bono H."/>
            <person name="Chalk A.M."/>
            <person name="Chiu K.P."/>
            <person name="Choudhary V."/>
            <person name="Christoffels A."/>
            <person name="Clutterbuck D.R."/>
            <person name="Crowe M.L."/>
            <person name="Dalla E."/>
            <person name="Dalrymple B.P."/>
            <person name="de Bono B."/>
            <person name="Della Gatta G."/>
            <person name="di Bernardo D."/>
            <person name="Down T."/>
            <person name="Engstrom P."/>
            <person name="Fagiolini M."/>
            <person name="Faulkner G."/>
            <person name="Fletcher C.F."/>
            <person name="Fukushima T."/>
            <person name="Furuno M."/>
            <person name="Futaki S."/>
            <person name="Gariboldi M."/>
            <person name="Georgii-Hemming P."/>
            <person name="Gingeras T.R."/>
            <person name="Gojobori T."/>
            <person name="Green R.E."/>
            <person name="Gustincich S."/>
            <person name="Harbers M."/>
            <person name="Hayashi Y."/>
            <person name="Hensch T.K."/>
            <person name="Hirokawa N."/>
            <person name="Hill D."/>
            <person name="Huminiecki L."/>
            <person name="Iacono M."/>
            <person name="Ikeo K."/>
            <person name="Iwama A."/>
            <person name="Ishikawa T."/>
            <person name="Jakt M."/>
            <person name="Kanapin A."/>
            <person name="Katoh M."/>
            <person name="Kawasawa Y."/>
            <person name="Kelso J."/>
            <person name="Kitamura H."/>
            <person name="Kitano H."/>
            <person name="Kollias G."/>
            <person name="Krishnan S.P."/>
            <person name="Kruger A."/>
            <person name="Kummerfeld S.K."/>
            <person name="Kurochkin I.V."/>
            <person name="Lareau L.F."/>
            <person name="Lazarevic D."/>
            <person name="Lipovich L."/>
            <person name="Liu J."/>
            <person name="Liuni S."/>
            <person name="McWilliam S."/>
            <person name="Madan Babu M."/>
            <person name="Madera M."/>
            <person name="Marchionni L."/>
            <person name="Matsuda H."/>
            <person name="Matsuzawa S."/>
            <person name="Miki H."/>
            <person name="Mignone F."/>
            <person name="Miyake S."/>
            <person name="Morris K."/>
            <person name="Mottagui-Tabar S."/>
            <person name="Mulder N."/>
            <person name="Nakano N."/>
            <person name="Nakauchi H."/>
            <person name="Ng P."/>
            <person name="Nilsson R."/>
            <person name="Nishiguchi S."/>
            <person name="Nishikawa S."/>
            <person name="Nori F."/>
            <person name="Ohara O."/>
            <person name="Okazaki Y."/>
            <person name="Orlando V."/>
            <person name="Pang K.C."/>
            <person name="Pavan W.J."/>
            <person name="Pavesi G."/>
            <person name="Pesole G."/>
            <person name="Petrovsky N."/>
            <person name="Piazza S."/>
            <person name="Reed J."/>
            <person name="Reid J.F."/>
            <person name="Ring B.Z."/>
            <person name="Ringwald M."/>
            <person name="Rost B."/>
            <person name="Ruan Y."/>
            <person name="Salzberg S.L."/>
            <person name="Sandelin A."/>
            <person name="Schneider C."/>
            <person name="Schoenbach C."/>
            <person name="Sekiguchi K."/>
            <person name="Semple C.A."/>
            <person name="Seno S."/>
            <person name="Sessa L."/>
            <person name="Sheng Y."/>
            <person name="Shibata Y."/>
            <person name="Shimada H."/>
            <person name="Shimada K."/>
            <person name="Silva D."/>
            <person name="Sinclair B."/>
            <person name="Sperling S."/>
            <person name="Stupka E."/>
            <person name="Sugiura K."/>
            <person name="Sultana R."/>
            <person name="Takenaka Y."/>
            <person name="Taki K."/>
            <person name="Tammoja K."/>
            <person name="Tan S.L."/>
            <person name="Tang S."/>
            <person name="Taylor M.S."/>
            <person name="Tegner J."/>
            <person name="Teichmann S.A."/>
            <person name="Ueda H.R."/>
            <person name="van Nimwegen E."/>
            <person name="Verardo R."/>
            <person name="Wei C.L."/>
            <person name="Yagi K."/>
            <person name="Yamanishi H."/>
            <person name="Zabarovsky E."/>
            <person name="Zhu S."/>
            <person name="Zimmer A."/>
            <person name="Hide W."/>
            <person name="Bult C."/>
            <person name="Grimmond S.M."/>
            <person name="Teasdale R.D."/>
            <person name="Liu E.T."/>
            <person name="Brusic V."/>
            <person name="Quackenbush J."/>
            <person name="Wahlestedt C."/>
            <person name="Mattick J.S."/>
            <person name="Hume D.A."/>
            <person name="Kai C."/>
            <person name="Sasaki D."/>
            <person name="Tomaru Y."/>
            <person name="Fukuda S."/>
            <person name="Kanamori-Katayama M."/>
            <person name="Suzuki M."/>
            <person name="Aoki J."/>
            <person name="Arakawa T."/>
            <person name="Iida J."/>
            <person name="Imamura K."/>
            <person name="Itoh M."/>
            <person name="Kato T."/>
            <person name="Kawaji H."/>
            <person name="Kawagashira N."/>
            <person name="Kawashima T."/>
            <person name="Kojima M."/>
            <person name="Kondo S."/>
            <person name="Konno H."/>
            <person name="Nakano K."/>
            <person name="Ninomiya N."/>
            <person name="Nishio T."/>
            <person name="Okada M."/>
            <person name="Plessy C."/>
            <person name="Shibata K."/>
            <person name="Shiraki T."/>
            <person name="Suzuki S."/>
            <person name="Tagami M."/>
            <person name="Waki K."/>
            <person name="Watahiki A."/>
            <person name="Okamura-Oho Y."/>
            <person name="Suzuki H."/>
            <person name="Kawai J."/>
            <person name="Hayashizaki Y."/>
        </authorList>
    </citation>
    <scope>NUCLEOTIDE SEQUENCE [LARGE SCALE MRNA]</scope>
    <source>
        <strain>C57BL/6J</strain>
    </source>
</reference>
<reference key="5">
    <citation type="journal article" date="2006" name="Proc. Natl. Acad. Sci. U.S.A.">
        <title>Salmonella typhimurium disseminates within its host by manipulating the motility of infected cells.</title>
        <authorList>
            <person name="Worley M.J."/>
            <person name="Nieman G.S."/>
            <person name="Geddes K."/>
            <person name="Heffron F."/>
        </authorList>
    </citation>
    <scope>INTERACTION WITH S.TYPHIMURIUM SSEI</scope>
</reference>
<reference key="6">
    <citation type="journal article" date="2009" name="Mol. Cell. Proteomics">
        <title>Large scale localization of protein phosphorylation by use of electron capture dissociation mass spectrometry.</title>
        <authorList>
            <person name="Sweet S.M."/>
            <person name="Bailey C.M."/>
            <person name="Cunningham D.L."/>
            <person name="Heath J.K."/>
            <person name="Cooper H.J."/>
        </authorList>
    </citation>
    <scope>PHOSPHORYLATION [LARGE SCALE ANALYSIS] AT SER-92</scope>
    <scope>IDENTIFICATION BY MASS SPECTROMETRY [LARGE SCALE ANALYSIS]</scope>
    <source>
        <tissue>Embryonic fibroblast</tissue>
    </source>
</reference>
<reference key="7">
    <citation type="journal article" date="2010" name="Cell">
        <title>A tissue-specific atlas of mouse protein phosphorylation and expression.</title>
        <authorList>
            <person name="Huttlin E.L."/>
            <person name="Jedrychowski M.P."/>
            <person name="Elias J.E."/>
            <person name="Goswami T."/>
            <person name="Rad R."/>
            <person name="Beausoleil S.A."/>
            <person name="Villen J."/>
            <person name="Haas W."/>
            <person name="Sowa M.E."/>
            <person name="Gygi S.P."/>
        </authorList>
    </citation>
    <scope>IDENTIFICATION BY MASS SPECTROMETRY [LARGE SCALE ANALYSIS]</scope>
    <source>
        <tissue>Kidney</tissue>
    </source>
</reference>
<reference key="8">
    <citation type="journal article" date="2014" name="Mol. Cell. Proteomics">
        <title>Immunoaffinity enrichment and mass spectrometry analysis of protein methylation.</title>
        <authorList>
            <person name="Guo A."/>
            <person name="Gu H."/>
            <person name="Zhou J."/>
            <person name="Mulhern D."/>
            <person name="Wang Y."/>
            <person name="Lee K.A."/>
            <person name="Yang V."/>
            <person name="Aguiar M."/>
            <person name="Kornhauser J."/>
            <person name="Jia X."/>
            <person name="Ren J."/>
            <person name="Beausoleil S.A."/>
            <person name="Silva J.C."/>
            <person name="Vemulapalli V."/>
            <person name="Bedford M.T."/>
            <person name="Comb M.J."/>
        </authorList>
    </citation>
    <scope>METHYLATION [LARGE SCALE ANALYSIS] AT ARG-25; ARG-190; ARG-209 AND ARG-242</scope>
    <scope>IDENTIFICATION BY MASS SPECTROMETRY [LARGE SCALE ANALYSIS]</scope>
    <source>
        <tissue>Brain</tissue>
        <tissue>Embryo</tissue>
    </source>
</reference>
<dbReference type="EMBL" id="AF116823">
    <property type="protein sequence ID" value="AAD45984.1"/>
    <property type="molecule type" value="mRNA"/>
</dbReference>
<dbReference type="EMBL" id="AF097511">
    <property type="protein sequence ID" value="AAC72380.1"/>
    <property type="molecule type" value="mRNA"/>
</dbReference>
<dbReference type="EMBL" id="AF312033">
    <property type="protein sequence ID" value="AAK28821.1"/>
    <property type="molecule type" value="Genomic_DNA"/>
</dbReference>
<dbReference type="EMBL" id="AK010435">
    <property type="protein sequence ID" value="BAB26937.1"/>
    <property type="molecule type" value="mRNA"/>
</dbReference>
<dbReference type="EMBL" id="AK159387">
    <property type="protein sequence ID" value="BAE35042.1"/>
    <property type="molecule type" value="mRNA"/>
</dbReference>
<dbReference type="CCDS" id="CCDS19765.1"/>
<dbReference type="RefSeq" id="NP_035769.1">
    <property type="nucleotide sequence ID" value="NM_011639.4"/>
</dbReference>
<dbReference type="SMR" id="Q9Z1Y4"/>
<dbReference type="BioGRID" id="204317">
    <property type="interactions" value="5"/>
</dbReference>
<dbReference type="FunCoup" id="Q9Z1Y4">
    <property type="interactions" value="606"/>
</dbReference>
<dbReference type="IntAct" id="Q9Z1Y4">
    <property type="interactions" value="6"/>
</dbReference>
<dbReference type="MINT" id="Q9Z1Y4"/>
<dbReference type="STRING" id="10090.ENSMUSP00000024119"/>
<dbReference type="GlyGen" id="Q9Z1Y4">
    <property type="glycosylation" value="3 sites, 1 O-linked glycan (1 site)"/>
</dbReference>
<dbReference type="iPTMnet" id="Q9Z1Y4"/>
<dbReference type="PhosphoSitePlus" id="Q9Z1Y4"/>
<dbReference type="PaxDb" id="10090-ENSMUSP00000024119"/>
<dbReference type="ProteomicsDB" id="298228"/>
<dbReference type="Pumba" id="Q9Z1Y4"/>
<dbReference type="Antibodypedia" id="16676">
    <property type="antibodies" value="403 antibodies from 37 providers"/>
</dbReference>
<dbReference type="DNASU" id="22051"/>
<dbReference type="Ensembl" id="ENSMUST00000024119.11">
    <property type="protein sequence ID" value="ENSMUSP00000024119.10"/>
    <property type="gene ID" value="ENSMUSG00000023348.12"/>
</dbReference>
<dbReference type="GeneID" id="22051"/>
<dbReference type="KEGG" id="mmu:22051"/>
<dbReference type="UCSC" id="uc009acd.1">
    <property type="organism name" value="mouse"/>
</dbReference>
<dbReference type="AGR" id="MGI:1343458"/>
<dbReference type="CTD" id="7205"/>
<dbReference type="MGI" id="MGI:1343458">
    <property type="gene designation" value="Trip6"/>
</dbReference>
<dbReference type="VEuPathDB" id="HostDB:ENSMUSG00000023348"/>
<dbReference type="eggNOG" id="KOG1701">
    <property type="taxonomic scope" value="Eukaryota"/>
</dbReference>
<dbReference type="GeneTree" id="ENSGT00940000154273"/>
<dbReference type="HOGENOM" id="CLU_001357_10_1_1"/>
<dbReference type="InParanoid" id="Q9Z1Y4"/>
<dbReference type="OMA" id="DRGCLRP"/>
<dbReference type="OrthoDB" id="25414at2759"/>
<dbReference type="PhylomeDB" id="Q9Z1Y4"/>
<dbReference type="TreeFam" id="TF320310"/>
<dbReference type="BioGRID-ORCS" id="22051">
    <property type="hits" value="1 hit in 78 CRISPR screens"/>
</dbReference>
<dbReference type="ChiTaRS" id="Trip6">
    <property type="organism name" value="mouse"/>
</dbReference>
<dbReference type="PRO" id="PR:Q9Z1Y4"/>
<dbReference type="Proteomes" id="UP000000589">
    <property type="component" value="Chromosome 5"/>
</dbReference>
<dbReference type="RNAct" id="Q9Z1Y4">
    <property type="molecule type" value="protein"/>
</dbReference>
<dbReference type="Bgee" id="ENSMUSG00000023348">
    <property type="expression patterns" value="Expressed in external carotid artery and 214 other cell types or tissues"/>
</dbReference>
<dbReference type="ExpressionAtlas" id="Q9Z1Y4">
    <property type="expression patterns" value="baseline and differential"/>
</dbReference>
<dbReference type="GO" id="GO:0005856">
    <property type="term" value="C:cytoskeleton"/>
    <property type="evidence" value="ECO:0000250"/>
    <property type="project" value="UniProtKB"/>
</dbReference>
<dbReference type="GO" id="GO:0005829">
    <property type="term" value="C:cytosol"/>
    <property type="evidence" value="ECO:0007669"/>
    <property type="project" value="Ensembl"/>
</dbReference>
<dbReference type="GO" id="GO:0005925">
    <property type="term" value="C:focal adhesion"/>
    <property type="evidence" value="ECO:0000250"/>
    <property type="project" value="UniProtKB"/>
</dbReference>
<dbReference type="GO" id="GO:0005634">
    <property type="term" value="C:nucleus"/>
    <property type="evidence" value="ECO:0000250"/>
    <property type="project" value="UniProtKB"/>
</dbReference>
<dbReference type="GO" id="GO:0005886">
    <property type="term" value="C:plasma membrane"/>
    <property type="evidence" value="ECO:0007669"/>
    <property type="project" value="Ensembl"/>
</dbReference>
<dbReference type="GO" id="GO:0005149">
    <property type="term" value="F:interleukin-1 receptor binding"/>
    <property type="evidence" value="ECO:0000250"/>
    <property type="project" value="UniProtKB"/>
</dbReference>
<dbReference type="GO" id="GO:0019900">
    <property type="term" value="F:kinase binding"/>
    <property type="evidence" value="ECO:0000250"/>
    <property type="project" value="UniProtKB"/>
</dbReference>
<dbReference type="GO" id="GO:0046872">
    <property type="term" value="F:metal ion binding"/>
    <property type="evidence" value="ECO:0007669"/>
    <property type="project" value="UniProtKB-KW"/>
</dbReference>
<dbReference type="GO" id="GO:0007155">
    <property type="term" value="P:cell adhesion"/>
    <property type="evidence" value="ECO:0007669"/>
    <property type="project" value="UniProtKB-KW"/>
</dbReference>
<dbReference type="GO" id="GO:0043009">
    <property type="term" value="P:chordate embryonic development"/>
    <property type="evidence" value="ECO:0000270"/>
    <property type="project" value="UniProtKB"/>
</dbReference>
<dbReference type="GO" id="GO:0030335">
    <property type="term" value="P:positive regulation of cell migration"/>
    <property type="evidence" value="ECO:0000250"/>
    <property type="project" value="UniProtKB"/>
</dbReference>
<dbReference type="GO" id="GO:1901224">
    <property type="term" value="P:positive regulation of non-canonical NF-kappaB signal transduction"/>
    <property type="evidence" value="ECO:0000250"/>
    <property type="project" value="UniProtKB"/>
</dbReference>
<dbReference type="CDD" id="cd09350">
    <property type="entry name" value="LIM1_TRIP6"/>
    <property type="match status" value="1"/>
</dbReference>
<dbReference type="CDD" id="cd09357">
    <property type="entry name" value="LIM3_Zyxin_like"/>
    <property type="match status" value="1"/>
</dbReference>
<dbReference type="FunFam" id="2.10.110.10:FF:000027">
    <property type="entry name" value="lipoma-preferred partner isoform X1"/>
    <property type="match status" value="1"/>
</dbReference>
<dbReference type="FunFam" id="2.10.110.10:FF:000042">
    <property type="entry name" value="lipoma-preferred partner isoform X1"/>
    <property type="match status" value="1"/>
</dbReference>
<dbReference type="FunFam" id="2.10.110.10:FF:000047">
    <property type="entry name" value="lipoma-preferred partner isoform X1"/>
    <property type="match status" value="1"/>
</dbReference>
<dbReference type="Gene3D" id="2.10.110.10">
    <property type="entry name" value="Cysteine Rich Protein"/>
    <property type="match status" value="3"/>
</dbReference>
<dbReference type="InterPro" id="IPR001781">
    <property type="entry name" value="Znf_LIM"/>
</dbReference>
<dbReference type="PANTHER" id="PTHR24212:SF7">
    <property type="entry name" value="THYROID RECEPTOR-INTERACTING PROTEIN 6"/>
    <property type="match status" value="1"/>
</dbReference>
<dbReference type="PANTHER" id="PTHR24212">
    <property type="entry name" value="ZYXIN/TRIP6"/>
    <property type="match status" value="1"/>
</dbReference>
<dbReference type="Pfam" id="PF00412">
    <property type="entry name" value="LIM"/>
    <property type="match status" value="3"/>
</dbReference>
<dbReference type="SMART" id="SM00132">
    <property type="entry name" value="LIM"/>
    <property type="match status" value="3"/>
</dbReference>
<dbReference type="SUPFAM" id="SSF57716">
    <property type="entry name" value="Glucocorticoid receptor-like (DNA-binding domain)"/>
    <property type="match status" value="3"/>
</dbReference>
<dbReference type="PROSITE" id="PS00478">
    <property type="entry name" value="LIM_DOMAIN_1"/>
    <property type="match status" value="2"/>
</dbReference>
<dbReference type="PROSITE" id="PS50023">
    <property type="entry name" value="LIM_DOMAIN_2"/>
    <property type="match status" value="3"/>
</dbReference>